<accession>A0QWT2</accession>
<accession>I7G171</accession>
<protein>
    <recommendedName>
        <fullName evidence="1">Coenzyme A biosynthesis bifunctional protein CoaBC</fullName>
    </recommendedName>
    <alternativeName>
        <fullName evidence="1">DNA/pantothenate metabolism flavoprotein</fullName>
    </alternativeName>
    <alternativeName>
        <fullName evidence="1">Phosphopantothenoylcysteine synthetase/decarboxylase</fullName>
        <shortName evidence="1">PPCS-PPCDC</shortName>
    </alternativeName>
    <domain>
        <recommendedName>
            <fullName evidence="1">Phosphopantothenoylcysteine decarboxylase</fullName>
            <shortName evidence="1">PPC decarboxylase</shortName>
            <shortName evidence="1">PPC-DC</shortName>
            <ecNumber evidence="1">4.1.1.36</ecNumber>
        </recommendedName>
        <alternativeName>
            <fullName evidence="1">CoaC</fullName>
        </alternativeName>
    </domain>
    <domain>
        <recommendedName>
            <fullName evidence="1">Phosphopantothenate--cysteine ligase</fullName>
            <ecNumber evidence="1">6.3.2.5</ecNumber>
        </recommendedName>
        <alternativeName>
            <fullName evidence="1">CoaB</fullName>
        </alternativeName>
        <alternativeName>
            <fullName evidence="1">Phosphopantothenoylcysteine synthetase</fullName>
            <shortName evidence="1">PPC synthetase</shortName>
            <shortName evidence="1">PPC-S</shortName>
        </alternativeName>
    </domain>
</protein>
<name>COABC_MYCS2</name>
<reference key="1">
    <citation type="submission" date="2006-10" db="EMBL/GenBank/DDBJ databases">
        <authorList>
            <person name="Fleischmann R.D."/>
            <person name="Dodson R.J."/>
            <person name="Haft D.H."/>
            <person name="Merkel J.S."/>
            <person name="Nelson W.C."/>
            <person name="Fraser C.M."/>
        </authorList>
    </citation>
    <scope>NUCLEOTIDE SEQUENCE [LARGE SCALE GENOMIC DNA]</scope>
    <source>
        <strain>ATCC 700084 / mc(2)155</strain>
    </source>
</reference>
<reference key="2">
    <citation type="journal article" date="2007" name="Genome Biol.">
        <title>Interrupted coding sequences in Mycobacterium smegmatis: authentic mutations or sequencing errors?</title>
        <authorList>
            <person name="Deshayes C."/>
            <person name="Perrodou E."/>
            <person name="Gallien S."/>
            <person name="Euphrasie D."/>
            <person name="Schaeffer C."/>
            <person name="Van-Dorsselaer A."/>
            <person name="Poch O."/>
            <person name="Lecompte O."/>
            <person name="Reyrat J.-M."/>
        </authorList>
    </citation>
    <scope>NUCLEOTIDE SEQUENCE [LARGE SCALE GENOMIC DNA]</scope>
    <source>
        <strain>ATCC 700084 / mc(2)155</strain>
    </source>
</reference>
<reference key="3">
    <citation type="journal article" date="2009" name="Genome Res.">
        <title>Ortho-proteogenomics: multiple proteomes investigation through orthology and a new MS-based protocol.</title>
        <authorList>
            <person name="Gallien S."/>
            <person name="Perrodou E."/>
            <person name="Carapito C."/>
            <person name="Deshayes C."/>
            <person name="Reyrat J.-M."/>
            <person name="Van Dorsselaer A."/>
            <person name="Poch O."/>
            <person name="Schaeffer C."/>
            <person name="Lecompte O."/>
        </authorList>
    </citation>
    <scope>NUCLEOTIDE SEQUENCE [LARGE SCALE GENOMIC DNA]</scope>
    <source>
        <strain>ATCC 700084 / mc(2)155</strain>
    </source>
</reference>
<reference evidence="6" key="4">
    <citation type="submission" date="2014-06" db="PDB data bank">
        <title>Crystal structure of the C-terminal CTP-binding domain of a phosphopantothenoylcysteine decarboxylase/phosphopantothenate-cysteine ligase with bound CTP from Mycobacterium smegmatis.</title>
        <authorList>
            <person name="Dranow D.M."/>
            <person name="Abendroth J."/>
            <person name="Wernimont A.K."/>
            <person name="Edwards T.E."/>
            <person name="Lorimer D."/>
        </authorList>
    </citation>
    <scope>X-RAY CRYSTALLOGRAPHY (2.65 ANGSTROMS) OF 186-414 IN COMPLEX WITH CTP</scope>
</reference>
<reference evidence="7 8" key="5">
    <citation type="journal article" date="2021" name="Nat. Commun.">
        <title>Inhibiting Mycobacterium tuberculosis CoaBC by targeting an allosteric site.</title>
        <authorList>
            <person name="Mendes V."/>
            <person name="Green S.R."/>
            <person name="Evans J.C."/>
            <person name="Hess J."/>
            <person name="Blaszczyk M."/>
            <person name="Spry C."/>
            <person name="Bryant O."/>
            <person name="Cory-Wright J."/>
            <person name="Chan D.S."/>
            <person name="Torres P.H.M."/>
            <person name="Wang Z."/>
            <person name="Nahiyaan N."/>
            <person name="O'Neill S."/>
            <person name="Damerow S."/>
            <person name="Post J."/>
            <person name="Bayliss T."/>
            <person name="Lynch S.L."/>
            <person name="Coyne A.G."/>
            <person name="Ray P.C."/>
            <person name="Abell C."/>
            <person name="Rhee K.Y."/>
            <person name="Boshoff H.I.M."/>
            <person name="Barry C.E. III"/>
            <person name="Mizrahi V."/>
            <person name="Wyatt P.G."/>
            <person name="Blundell T.L."/>
        </authorList>
    </citation>
    <scope>X-RAY CRYSTALLOGRAPHY (1.84 ANGSTROMS) OF 186-414 IN COMPLEX WITH CTP AND INHIBITOR</scope>
    <scope>ACTIVITY REGULATION</scope>
    <scope>SUBUNIT</scope>
    <source>
        <strain>ATCC 700084 / mc(2)155</strain>
    </source>
</reference>
<evidence type="ECO:0000255" key="1">
    <source>
        <dbReference type="HAMAP-Rule" id="MF_02225"/>
    </source>
</evidence>
<evidence type="ECO:0000269" key="2">
    <source>
    </source>
</evidence>
<evidence type="ECO:0000269" key="3">
    <source ref="4"/>
</evidence>
<evidence type="ECO:0000312" key="4">
    <source>
        <dbReference type="EMBL" id="ABK75458.1"/>
    </source>
</evidence>
<evidence type="ECO:0000312" key="5">
    <source>
        <dbReference type="EMBL" id="AFP39442.1"/>
    </source>
</evidence>
<evidence type="ECO:0007744" key="6">
    <source>
        <dbReference type="PDB" id="4QJI"/>
    </source>
</evidence>
<evidence type="ECO:0007744" key="7">
    <source>
        <dbReference type="PDB" id="6TH2"/>
    </source>
</evidence>
<evidence type="ECO:0007744" key="8">
    <source>
        <dbReference type="PDB" id="6THC"/>
    </source>
</evidence>
<evidence type="ECO:0007829" key="9">
    <source>
        <dbReference type="PDB" id="6TGV"/>
    </source>
</evidence>
<evidence type="ECO:0007829" key="10">
    <source>
        <dbReference type="PDB" id="6TH2"/>
    </source>
</evidence>
<evidence type="ECO:0007829" key="11">
    <source>
        <dbReference type="PDB" id="6THC"/>
    </source>
</evidence>
<sequence length="414" mass="43152">MSARKRIVVGVAGGIAAYKACTVVRQLTEAGHSVRVVPTESALRFVGAATFEALSGNPVHTGVFTDVHEVQHVRIGQQADLVVIAPATADLLARAVAGRADDLLTATLLTARCPVLFAPAMHTEMWLHPATVDNVATLRRRGAVVLEPASGRLTGADSGPGRLPEAEEITTLAQLLLERADALPYDMAGVKALVTAGGTREPLDPVRFIGNRSSGKQGYAVARVLAQRGADVTLIAGNTAGLIDPAGVEMVHIGSATQLRDAVSKHAPDANVLVMAAAVADFRPAHVAAAKIKKGASEPSSIDLVRNDDVLAGAVRARADGQLPNMRAIVGFAAETGDANGDVLFHARAKLERKGCDLLVVNAVGENRAFEVDHNDGWLLSADGTESALEHGSKTLMATRIVDSIAAFLKSQDG</sequence>
<organism>
    <name type="scientific">Mycolicibacterium smegmatis (strain ATCC 700084 / mc(2)155)</name>
    <name type="common">Mycobacterium smegmatis</name>
    <dbReference type="NCBI Taxonomy" id="246196"/>
    <lineage>
        <taxon>Bacteria</taxon>
        <taxon>Bacillati</taxon>
        <taxon>Actinomycetota</taxon>
        <taxon>Actinomycetes</taxon>
        <taxon>Mycobacteriales</taxon>
        <taxon>Mycobacteriaceae</taxon>
        <taxon>Mycolicibacterium</taxon>
    </lineage>
</organism>
<feature type="chain" id="PRO_0000453018" description="Coenzyme A biosynthesis bifunctional protein CoaBC">
    <location>
        <begin position="1"/>
        <end position="414"/>
    </location>
</feature>
<feature type="region of interest" description="Phosphopantothenoylcysteine decarboxylase" evidence="1">
    <location>
        <begin position="1"/>
        <end position="191"/>
    </location>
</feature>
<feature type="region of interest" description="Phosphopantothenate--cysteine ligase" evidence="1">
    <location>
        <begin position="192"/>
        <end position="414"/>
    </location>
</feature>
<feature type="binding site" evidence="2 3 6 7 8">
    <location>
        <begin position="275"/>
        <end position="277"/>
    </location>
    <ligand>
        <name>CTP</name>
        <dbReference type="ChEBI" id="CHEBI:37563"/>
    </ligand>
</feature>
<feature type="binding site" evidence="1 2 3 6 7">
    <location>
        <position position="281"/>
    </location>
    <ligand>
        <name>CTP</name>
        <dbReference type="ChEBI" id="CHEBI:37563"/>
    </ligand>
</feature>
<feature type="binding site" evidence="1 2 3 6 8">
    <location>
        <position position="291"/>
    </location>
    <ligand>
        <name>CTP</name>
        <dbReference type="ChEBI" id="CHEBI:37563"/>
    </ligand>
</feature>
<feature type="binding site" evidence="2 7 8">
    <location>
        <begin position="293"/>
        <end position="294"/>
    </location>
    <ligand>
        <name>CTP</name>
        <dbReference type="ChEBI" id="CHEBI:37563"/>
    </ligand>
</feature>
<feature type="binding site" evidence="2 3 6 7 8">
    <location>
        <begin position="308"/>
        <end position="311"/>
    </location>
    <ligand>
        <name>CTP</name>
        <dbReference type="ChEBI" id="CHEBI:37563"/>
    </ligand>
</feature>
<feature type="binding site" evidence="1 2 3 6 7 8">
    <location>
        <position position="332"/>
    </location>
    <ligand>
        <name>CTP</name>
        <dbReference type="ChEBI" id="CHEBI:37563"/>
    </ligand>
</feature>
<feature type="binding site" evidence="1 2 3 6 7 8">
    <location>
        <position position="350"/>
    </location>
    <ligand>
        <name>CTP</name>
        <dbReference type="ChEBI" id="CHEBI:37563"/>
    </ligand>
</feature>
<feature type="binding site" evidence="1 2 3 6 7 8">
    <location>
        <position position="354"/>
    </location>
    <ligand>
        <name>CTP</name>
        <dbReference type="ChEBI" id="CHEBI:37563"/>
    </ligand>
</feature>
<feature type="strand" evidence="9">
    <location>
        <begin position="6"/>
        <end position="11"/>
    </location>
</feature>
<feature type="helix" evidence="9">
    <location>
        <begin position="17"/>
        <end position="29"/>
    </location>
</feature>
<feature type="strand" evidence="9">
    <location>
        <begin position="33"/>
        <end position="38"/>
    </location>
</feature>
<feature type="helix" evidence="9">
    <location>
        <begin position="40"/>
        <end position="43"/>
    </location>
</feature>
<feature type="helix" evidence="9">
    <location>
        <begin position="48"/>
        <end position="55"/>
    </location>
</feature>
<feature type="turn" evidence="9">
    <location>
        <begin position="63"/>
        <end position="66"/>
    </location>
</feature>
<feature type="helix" evidence="9">
    <location>
        <begin position="67"/>
        <end position="69"/>
    </location>
</feature>
<feature type="turn" evidence="9">
    <location>
        <begin position="70"/>
        <end position="73"/>
    </location>
</feature>
<feature type="helix" evidence="9">
    <location>
        <begin position="74"/>
        <end position="77"/>
    </location>
</feature>
<feature type="strand" evidence="9">
    <location>
        <begin position="80"/>
        <end position="87"/>
    </location>
</feature>
<feature type="helix" evidence="9">
    <location>
        <begin position="89"/>
        <end position="97"/>
    </location>
</feature>
<feature type="helix" evidence="9">
    <location>
        <begin position="103"/>
        <end position="110"/>
    </location>
</feature>
<feature type="strand" evidence="9">
    <location>
        <begin position="115"/>
        <end position="119"/>
    </location>
</feature>
<feature type="helix" evidence="9">
    <location>
        <begin position="123"/>
        <end position="126"/>
    </location>
</feature>
<feature type="helix" evidence="9">
    <location>
        <begin position="129"/>
        <end position="141"/>
    </location>
</feature>
<feature type="strand" evidence="9">
    <location>
        <begin position="160"/>
        <end position="162"/>
    </location>
</feature>
<feature type="helix" evidence="9">
    <location>
        <begin position="166"/>
        <end position="178"/>
    </location>
</feature>
<feature type="turn" evidence="10">
    <location>
        <begin position="186"/>
        <end position="189"/>
    </location>
</feature>
<feature type="strand" evidence="10">
    <location>
        <begin position="191"/>
        <end position="198"/>
    </location>
</feature>
<feature type="strand" evidence="10">
    <location>
        <begin position="201"/>
        <end position="211"/>
    </location>
</feature>
<feature type="helix" evidence="10">
    <location>
        <begin position="216"/>
        <end position="227"/>
    </location>
</feature>
<feature type="strand" evidence="10">
    <location>
        <begin position="231"/>
        <end position="236"/>
    </location>
</feature>
<feature type="strand" evidence="10">
    <location>
        <begin position="249"/>
        <end position="252"/>
    </location>
</feature>
<feature type="helix" evidence="10">
    <location>
        <begin position="256"/>
        <end position="266"/>
    </location>
</feature>
<feature type="helix" evidence="11">
    <location>
        <begin position="267"/>
        <end position="269"/>
    </location>
</feature>
<feature type="strand" evidence="10">
    <location>
        <begin position="271"/>
        <end position="275"/>
    </location>
</feature>
<feature type="strand" evidence="10">
    <location>
        <begin position="281"/>
        <end position="285"/>
    </location>
</feature>
<feature type="strand" evidence="10">
    <location>
        <begin position="304"/>
        <end position="306"/>
    </location>
</feature>
<feature type="helix" evidence="10">
    <location>
        <begin position="310"/>
        <end position="319"/>
    </location>
</feature>
<feature type="strand" evidence="10">
    <location>
        <begin position="328"/>
        <end position="335"/>
    </location>
</feature>
<feature type="strand" evidence="9">
    <location>
        <begin position="339"/>
        <end position="341"/>
    </location>
</feature>
<feature type="helix" evidence="10">
    <location>
        <begin position="343"/>
        <end position="354"/>
    </location>
</feature>
<feature type="strand" evidence="10">
    <location>
        <begin position="357"/>
        <end position="363"/>
    </location>
</feature>
<feature type="strand" evidence="10">
    <location>
        <begin position="377"/>
        <end position="381"/>
    </location>
</feature>
<feature type="strand" evidence="10">
    <location>
        <begin position="386"/>
        <end position="389"/>
    </location>
</feature>
<feature type="helix" evidence="10">
    <location>
        <begin position="394"/>
        <end position="411"/>
    </location>
</feature>
<comment type="function">
    <text evidence="1">Catalyzes two sequential steps in the biosynthesis of coenzyme A. In the first step cysteine is conjugated to 4'-phosphopantothenate to form 4-phosphopantothenoylcysteine. In the second step the latter compound is decarboxylated to form 4'-phosphopantotheine.</text>
</comment>
<comment type="catalytic activity">
    <reaction evidence="1">
        <text>N-[(R)-4-phosphopantothenoyl]-L-cysteine + H(+) = (R)-4'-phosphopantetheine + CO2</text>
        <dbReference type="Rhea" id="RHEA:16793"/>
        <dbReference type="ChEBI" id="CHEBI:15378"/>
        <dbReference type="ChEBI" id="CHEBI:16526"/>
        <dbReference type="ChEBI" id="CHEBI:59458"/>
        <dbReference type="ChEBI" id="CHEBI:61723"/>
        <dbReference type="EC" id="4.1.1.36"/>
    </reaction>
</comment>
<comment type="catalytic activity">
    <reaction evidence="1">
        <text>(R)-4'-phosphopantothenate + L-cysteine + CTP = N-[(R)-4-phosphopantothenoyl]-L-cysteine + CMP + diphosphate + H(+)</text>
        <dbReference type="Rhea" id="RHEA:19397"/>
        <dbReference type="ChEBI" id="CHEBI:10986"/>
        <dbReference type="ChEBI" id="CHEBI:15378"/>
        <dbReference type="ChEBI" id="CHEBI:33019"/>
        <dbReference type="ChEBI" id="CHEBI:35235"/>
        <dbReference type="ChEBI" id="CHEBI:37563"/>
        <dbReference type="ChEBI" id="CHEBI:59458"/>
        <dbReference type="ChEBI" id="CHEBI:60377"/>
        <dbReference type="EC" id="6.3.2.5"/>
    </reaction>
</comment>
<comment type="cofactor">
    <cofactor evidence="1">
        <name>Mg(2+)</name>
        <dbReference type="ChEBI" id="CHEBI:18420"/>
    </cofactor>
</comment>
<comment type="cofactor">
    <cofactor evidence="1">
        <name>FMN</name>
        <dbReference type="ChEBI" id="CHEBI:58210"/>
    </cofactor>
    <text evidence="1">Binds 1 FMN per subunit.</text>
</comment>
<comment type="activity regulation">
    <text evidence="2">Two related chemical scaffolds that potently inhibit the activity of the CoaB moiety of CoaBC through a cryptic allosteric site that sits in the dimer interface region of the CoaB enzyme were identified.</text>
</comment>
<comment type="pathway">
    <text evidence="1">Cofactor biosynthesis; coenzyme A biosynthesis; CoA from (R)-pantothenate: step 2/5.</text>
</comment>
<comment type="pathway">
    <text evidence="1">Cofactor biosynthesis; coenzyme A biosynthesis; CoA from (R)-pantothenate: step 3/5.</text>
</comment>
<comment type="subunit">
    <text evidence="2">Homododecamer.</text>
</comment>
<comment type="similarity">
    <text evidence="1">In the N-terminal section; belongs to the HFCD (homo-oligomeric flavin containing Cys decarboxylase) superfamily.</text>
</comment>
<comment type="similarity">
    <text evidence="1">In the C-terminal section; belongs to the PPC synthetase family.</text>
</comment>
<gene>
    <name evidence="1" type="primary">coaBC</name>
    <name evidence="4" type="ordered locus">MSMEG_3054</name>
    <name evidence="5" type="ordered locus">MSMEI_2978</name>
</gene>
<dbReference type="EC" id="4.1.1.36" evidence="1"/>
<dbReference type="EC" id="6.3.2.5" evidence="1"/>
<dbReference type="EMBL" id="CP000480">
    <property type="protein sequence ID" value="ABK75458.1"/>
    <property type="molecule type" value="Genomic_DNA"/>
</dbReference>
<dbReference type="EMBL" id="CP001663">
    <property type="protein sequence ID" value="AFP39442.1"/>
    <property type="molecule type" value="Genomic_DNA"/>
</dbReference>
<dbReference type="RefSeq" id="WP_011728784.1">
    <property type="nucleotide sequence ID" value="NZ_SIJM01000002.1"/>
</dbReference>
<dbReference type="RefSeq" id="YP_887370.1">
    <property type="nucleotide sequence ID" value="NC_008596.1"/>
</dbReference>
<dbReference type="PDB" id="4QJI">
    <property type="method" value="X-ray"/>
    <property type="resolution" value="2.65 A"/>
    <property type="chains" value="A/B=186-414"/>
</dbReference>
<dbReference type="PDB" id="6TGV">
    <property type="method" value="X-ray"/>
    <property type="resolution" value="2.50 A"/>
    <property type="chains" value="A/B/C/D=1-414"/>
</dbReference>
<dbReference type="PDB" id="6TH2">
    <property type="method" value="X-ray"/>
    <property type="resolution" value="1.84 A"/>
    <property type="chains" value="A/B/C/D=186-414"/>
</dbReference>
<dbReference type="PDB" id="6THC">
    <property type="method" value="X-ray"/>
    <property type="resolution" value="2.03 A"/>
    <property type="chains" value="A/B/C/D=186-414"/>
</dbReference>
<dbReference type="PDB" id="8OW5">
    <property type="method" value="X-ray"/>
    <property type="resolution" value="2.84 A"/>
    <property type="chains" value="A/B/C/D=186-414"/>
</dbReference>
<dbReference type="PDB" id="8OWB">
    <property type="method" value="X-ray"/>
    <property type="resolution" value="2.25 A"/>
    <property type="chains" value="A/B/C/D=186-414"/>
</dbReference>
<dbReference type="PDB" id="8OWP">
    <property type="method" value="X-ray"/>
    <property type="resolution" value="1.99 A"/>
    <property type="chains" value="A/B/C/D=186-414"/>
</dbReference>
<dbReference type="PDB" id="8OWQ">
    <property type="method" value="X-ray"/>
    <property type="resolution" value="2.11 A"/>
    <property type="chains" value="A/B/C/D=186-414"/>
</dbReference>
<dbReference type="PDB" id="8OWR">
    <property type="method" value="X-ray"/>
    <property type="resolution" value="2.44 A"/>
    <property type="chains" value="A/B/C/D=186-414"/>
</dbReference>
<dbReference type="PDBsum" id="4QJI"/>
<dbReference type="PDBsum" id="6TGV"/>
<dbReference type="PDBsum" id="6TH2"/>
<dbReference type="PDBsum" id="6THC"/>
<dbReference type="PDBsum" id="8OW5"/>
<dbReference type="PDBsum" id="8OWB"/>
<dbReference type="PDBsum" id="8OWP"/>
<dbReference type="PDBsum" id="8OWQ"/>
<dbReference type="PDBsum" id="8OWR"/>
<dbReference type="SMR" id="A0QWT2"/>
<dbReference type="STRING" id="246196.MSMEG_3054"/>
<dbReference type="PaxDb" id="246196-MSMEI_2978"/>
<dbReference type="GeneID" id="93457831"/>
<dbReference type="KEGG" id="msb:LJ00_15195"/>
<dbReference type="KEGG" id="msg:MSMEI_2978"/>
<dbReference type="KEGG" id="msm:MSMEG_3054"/>
<dbReference type="PATRIC" id="fig|246196.19.peg.3015"/>
<dbReference type="eggNOG" id="COG0452">
    <property type="taxonomic scope" value="Bacteria"/>
</dbReference>
<dbReference type="OrthoDB" id="9802554at2"/>
<dbReference type="UniPathway" id="UPA00241">
    <property type="reaction ID" value="UER00353"/>
</dbReference>
<dbReference type="UniPathway" id="UPA00241">
    <property type="reaction ID" value="UER00354"/>
</dbReference>
<dbReference type="EvolutionaryTrace" id="A0QWT2"/>
<dbReference type="Proteomes" id="UP000000757">
    <property type="component" value="Chromosome"/>
</dbReference>
<dbReference type="Proteomes" id="UP000006158">
    <property type="component" value="Chromosome"/>
</dbReference>
<dbReference type="GO" id="GO:0071513">
    <property type="term" value="C:phosphopantothenoylcysteine decarboxylase complex"/>
    <property type="evidence" value="ECO:0007669"/>
    <property type="project" value="TreeGrafter"/>
</dbReference>
<dbReference type="GO" id="GO:0010181">
    <property type="term" value="F:FMN binding"/>
    <property type="evidence" value="ECO:0007669"/>
    <property type="project" value="UniProtKB-UniRule"/>
</dbReference>
<dbReference type="GO" id="GO:0046872">
    <property type="term" value="F:metal ion binding"/>
    <property type="evidence" value="ECO:0007669"/>
    <property type="project" value="UniProtKB-KW"/>
</dbReference>
<dbReference type="GO" id="GO:0004632">
    <property type="term" value="F:phosphopantothenate--cysteine ligase activity"/>
    <property type="evidence" value="ECO:0007669"/>
    <property type="project" value="UniProtKB-UniRule"/>
</dbReference>
<dbReference type="GO" id="GO:0004633">
    <property type="term" value="F:phosphopantothenoylcysteine decarboxylase activity"/>
    <property type="evidence" value="ECO:0007669"/>
    <property type="project" value="UniProtKB-UniRule"/>
</dbReference>
<dbReference type="GO" id="GO:0015937">
    <property type="term" value="P:coenzyme A biosynthetic process"/>
    <property type="evidence" value="ECO:0007669"/>
    <property type="project" value="UniProtKB-UniRule"/>
</dbReference>
<dbReference type="GO" id="GO:0015941">
    <property type="term" value="P:pantothenate catabolic process"/>
    <property type="evidence" value="ECO:0007669"/>
    <property type="project" value="InterPro"/>
</dbReference>
<dbReference type="Gene3D" id="3.40.50.10300">
    <property type="entry name" value="CoaB-like"/>
    <property type="match status" value="1"/>
</dbReference>
<dbReference type="Gene3D" id="3.40.50.1950">
    <property type="entry name" value="Flavin prenyltransferase-like"/>
    <property type="match status" value="1"/>
</dbReference>
<dbReference type="HAMAP" id="MF_02225">
    <property type="entry name" value="CoaBC"/>
    <property type="match status" value="1"/>
</dbReference>
<dbReference type="InterPro" id="IPR035929">
    <property type="entry name" value="CoaB-like_sf"/>
</dbReference>
<dbReference type="InterPro" id="IPR005252">
    <property type="entry name" value="CoaBC"/>
</dbReference>
<dbReference type="InterPro" id="IPR007085">
    <property type="entry name" value="DNA/pantothenate-metab_flavo_C"/>
</dbReference>
<dbReference type="InterPro" id="IPR036551">
    <property type="entry name" value="Flavin_trans-like"/>
</dbReference>
<dbReference type="InterPro" id="IPR003382">
    <property type="entry name" value="Flavoprotein"/>
</dbReference>
<dbReference type="NCBIfam" id="TIGR00521">
    <property type="entry name" value="coaBC_dfp"/>
    <property type="match status" value="1"/>
</dbReference>
<dbReference type="PANTHER" id="PTHR14359">
    <property type="entry name" value="HOMO-OLIGOMERIC FLAVIN CONTAINING CYS DECARBOXYLASE FAMILY"/>
    <property type="match status" value="1"/>
</dbReference>
<dbReference type="PANTHER" id="PTHR14359:SF6">
    <property type="entry name" value="PHOSPHOPANTOTHENOYLCYSTEINE DECARBOXYLASE"/>
    <property type="match status" value="1"/>
</dbReference>
<dbReference type="Pfam" id="PF04127">
    <property type="entry name" value="DFP"/>
    <property type="match status" value="1"/>
</dbReference>
<dbReference type="Pfam" id="PF02441">
    <property type="entry name" value="Flavoprotein"/>
    <property type="match status" value="1"/>
</dbReference>
<dbReference type="SUPFAM" id="SSF102645">
    <property type="entry name" value="CoaB-like"/>
    <property type="match status" value="1"/>
</dbReference>
<dbReference type="SUPFAM" id="SSF52507">
    <property type="entry name" value="Homo-oligomeric flavin-containing Cys decarboxylases, HFCD"/>
    <property type="match status" value="1"/>
</dbReference>
<keyword id="KW-0002">3D-structure</keyword>
<keyword id="KW-0210">Decarboxylase</keyword>
<keyword id="KW-0285">Flavoprotein</keyword>
<keyword id="KW-0288">FMN</keyword>
<keyword id="KW-0436">Ligase</keyword>
<keyword id="KW-0456">Lyase</keyword>
<keyword id="KW-0460">Magnesium</keyword>
<keyword id="KW-0479">Metal-binding</keyword>
<keyword id="KW-0511">Multifunctional enzyme</keyword>
<keyword id="KW-0547">Nucleotide-binding</keyword>
<keyword id="KW-1185">Reference proteome</keyword>
<proteinExistence type="evidence at protein level"/>